<reference key="1">
    <citation type="journal article" date="2005" name="Nature">
        <title>Genomic sequence of the pathogenic and allergenic filamentous fungus Aspergillus fumigatus.</title>
        <authorList>
            <person name="Nierman W.C."/>
            <person name="Pain A."/>
            <person name="Anderson M.J."/>
            <person name="Wortman J.R."/>
            <person name="Kim H.S."/>
            <person name="Arroyo J."/>
            <person name="Berriman M."/>
            <person name="Abe K."/>
            <person name="Archer D.B."/>
            <person name="Bermejo C."/>
            <person name="Bennett J.W."/>
            <person name="Bowyer P."/>
            <person name="Chen D."/>
            <person name="Collins M."/>
            <person name="Coulsen R."/>
            <person name="Davies R."/>
            <person name="Dyer P.S."/>
            <person name="Farman M.L."/>
            <person name="Fedorova N."/>
            <person name="Fedorova N.D."/>
            <person name="Feldblyum T.V."/>
            <person name="Fischer R."/>
            <person name="Fosker N."/>
            <person name="Fraser A."/>
            <person name="Garcia J.L."/>
            <person name="Garcia M.J."/>
            <person name="Goble A."/>
            <person name="Goldman G.H."/>
            <person name="Gomi K."/>
            <person name="Griffith-Jones S."/>
            <person name="Gwilliam R."/>
            <person name="Haas B.J."/>
            <person name="Haas H."/>
            <person name="Harris D.E."/>
            <person name="Horiuchi H."/>
            <person name="Huang J."/>
            <person name="Humphray S."/>
            <person name="Jimenez J."/>
            <person name="Keller N."/>
            <person name="Khouri H."/>
            <person name="Kitamoto K."/>
            <person name="Kobayashi T."/>
            <person name="Konzack S."/>
            <person name="Kulkarni R."/>
            <person name="Kumagai T."/>
            <person name="Lafton A."/>
            <person name="Latge J.-P."/>
            <person name="Li W."/>
            <person name="Lord A."/>
            <person name="Lu C."/>
            <person name="Majoros W.H."/>
            <person name="May G.S."/>
            <person name="Miller B.L."/>
            <person name="Mohamoud Y."/>
            <person name="Molina M."/>
            <person name="Monod M."/>
            <person name="Mouyna I."/>
            <person name="Mulligan S."/>
            <person name="Murphy L.D."/>
            <person name="O'Neil S."/>
            <person name="Paulsen I."/>
            <person name="Penalva M.A."/>
            <person name="Pertea M."/>
            <person name="Price C."/>
            <person name="Pritchard B.L."/>
            <person name="Quail M.A."/>
            <person name="Rabbinowitsch E."/>
            <person name="Rawlins N."/>
            <person name="Rajandream M.A."/>
            <person name="Reichard U."/>
            <person name="Renauld H."/>
            <person name="Robson G.D."/>
            <person name="Rodriguez de Cordoba S."/>
            <person name="Rodriguez-Pena J.M."/>
            <person name="Ronning C.M."/>
            <person name="Rutter S."/>
            <person name="Salzberg S.L."/>
            <person name="Sanchez M."/>
            <person name="Sanchez-Ferrero J.C."/>
            <person name="Saunders D."/>
            <person name="Seeger K."/>
            <person name="Squares R."/>
            <person name="Squares S."/>
            <person name="Takeuchi M."/>
            <person name="Tekaia F."/>
            <person name="Turner G."/>
            <person name="Vazquez de Aldana C.R."/>
            <person name="Weidman J."/>
            <person name="White O."/>
            <person name="Woodward J.R."/>
            <person name="Yu J.-H."/>
            <person name="Fraser C.M."/>
            <person name="Galagan J.E."/>
            <person name="Asai K."/>
            <person name="Machida M."/>
            <person name="Hall N."/>
            <person name="Barrell B.G."/>
            <person name="Denning D.W."/>
        </authorList>
    </citation>
    <scope>NUCLEOTIDE SEQUENCE [LARGE SCALE GENOMIC DNA]</scope>
    <source>
        <strain>ATCC MYA-4609 / CBS 101355 / FGSC A1100 / Af293</strain>
    </source>
</reference>
<name>PRM1_ASPFU</name>
<proteinExistence type="inferred from homology"/>
<comment type="function">
    <text evidence="1">Involved in cell fusion during mating by stabilizing the plasma membrane fusion event.</text>
</comment>
<comment type="subcellular location">
    <subcellularLocation>
        <location evidence="1">Cell membrane</location>
        <topology evidence="1">Multi-pass membrane protein</topology>
    </subcellularLocation>
</comment>
<comment type="similarity">
    <text evidence="3">Belongs to the PRM1 family.</text>
</comment>
<sequence>MLFSRSGRSIFPLLPPYAAHAPNPNQGHIIALPPDGLTPYLGLRARLSQVWINRWTILLLLVLVRVLLAASGLQADMSTAKREALSACTSVESMGSSMASMPHYLSQGVNELTATGVEKAVSGLKSMLMLTITGVEELVLFIIKVLYQTYLCLFTLAVRGSVHVAVGVIKEAADFLNSTVKEVGDDIGKAVSTFESAFNKFLDGVNTVASAFGASVPTLDLNSSISTLENLQLPSSIDQGLDKLNSSLPTFDEVNNFTQTVLRTPFEEVKKLVNESLGTYTFDRSLLPVPAKEQLTFCEGSNGIDSFFDSVTDLVMKARKIFIAILIVAATLACVPMAWQEIRRWRSMKERSQLVRKEAHDPMDVVYIVSRPYTAAAGIKAASRFSNSRRQILVRWAIAYATTPAALFVLCLGVAGLLSCLCQYLLLQAVEKTVPELSTQVGAFADKVVDSLQNASAEWANDANGVIGHMSQDLNENVFGWVNTSTTALNDTLNTFVDKTTGVLNDTFGGTLLYEPLMDVFGCLIGLKVQGIQKGLTWVHDHAHIDFPLLPNDTFSRGAAASISSNSSNPSDSFLADAGDQTSNKITEVVIRVVNKVEDGIRTETIISGVIILIWVFIALIGIVRALTLFWVRDRNRGEGGGARVNHHLSDAGGFIDVPLTAVSNTNTDARSMPPPAPAPRYEASTSTVVASRAVPVSSTHHEDEKLGFAGERQYGSALKVDGAADLRGSSYVEYDMEKR</sequence>
<evidence type="ECO:0000250" key="1"/>
<evidence type="ECO:0000255" key="2"/>
<evidence type="ECO:0000305" key="3"/>
<organism>
    <name type="scientific">Aspergillus fumigatus (strain ATCC MYA-4609 / CBS 101355 / FGSC A1100 / Af293)</name>
    <name type="common">Neosartorya fumigata</name>
    <dbReference type="NCBI Taxonomy" id="330879"/>
    <lineage>
        <taxon>Eukaryota</taxon>
        <taxon>Fungi</taxon>
        <taxon>Dikarya</taxon>
        <taxon>Ascomycota</taxon>
        <taxon>Pezizomycotina</taxon>
        <taxon>Eurotiomycetes</taxon>
        <taxon>Eurotiomycetidae</taxon>
        <taxon>Eurotiales</taxon>
        <taxon>Aspergillaceae</taxon>
        <taxon>Aspergillus</taxon>
        <taxon>Aspergillus subgen. Fumigati</taxon>
    </lineage>
</organism>
<feature type="chain" id="PRO_0000337269" description="Plasma membrane fusion protein prm1">
    <location>
        <begin position="1"/>
        <end position="740"/>
    </location>
</feature>
<feature type="topological domain" description="Extracellular" evidence="1">
    <location>
        <begin position="1"/>
        <end position="54"/>
    </location>
</feature>
<feature type="transmembrane region" description="Helical" evidence="2">
    <location>
        <begin position="55"/>
        <end position="75"/>
    </location>
</feature>
<feature type="topological domain" description="Cytoplasmic" evidence="1">
    <location>
        <begin position="76"/>
        <end position="137"/>
    </location>
</feature>
<feature type="transmembrane region" description="Helical" evidence="2">
    <location>
        <begin position="138"/>
        <end position="158"/>
    </location>
</feature>
<feature type="topological domain" description="Extracellular" evidence="1">
    <location>
        <begin position="159"/>
        <end position="320"/>
    </location>
</feature>
<feature type="transmembrane region" description="Helical" evidence="2">
    <location>
        <begin position="321"/>
        <end position="341"/>
    </location>
</feature>
<feature type="topological domain" description="Cytoplasmic" evidence="1">
    <location>
        <begin position="342"/>
        <end position="397"/>
    </location>
</feature>
<feature type="transmembrane region" description="Helical" evidence="2">
    <location>
        <begin position="398"/>
        <end position="418"/>
    </location>
</feature>
<feature type="topological domain" description="Extracellular" evidence="1">
    <location>
        <begin position="419"/>
        <end position="603"/>
    </location>
</feature>
<feature type="transmembrane region" description="Helical" evidence="2">
    <location>
        <begin position="604"/>
        <end position="624"/>
    </location>
</feature>
<feature type="topological domain" description="Cytoplasmic" evidence="1">
    <location>
        <begin position="625"/>
        <end position="740"/>
    </location>
</feature>
<feature type="glycosylation site" description="N-linked (GlcNAc...) asparagine" evidence="2">
    <location>
        <position position="177"/>
    </location>
</feature>
<feature type="glycosylation site" description="N-linked (GlcNAc...) asparagine" evidence="2">
    <location>
        <position position="222"/>
    </location>
</feature>
<feature type="glycosylation site" description="N-linked (GlcNAc...) asparagine" evidence="2">
    <location>
        <position position="245"/>
    </location>
</feature>
<feature type="glycosylation site" description="N-linked (GlcNAc...) asparagine" evidence="2">
    <location>
        <position position="256"/>
    </location>
</feature>
<feature type="glycosylation site" description="N-linked (GlcNAc...) asparagine" evidence="2">
    <location>
        <position position="274"/>
    </location>
</feature>
<feature type="glycosylation site" description="N-linked (GlcNAc...) asparagine" evidence="2">
    <location>
        <position position="454"/>
    </location>
</feature>
<feature type="glycosylation site" description="N-linked (GlcNAc...) asparagine" evidence="2">
    <location>
        <position position="483"/>
    </location>
</feature>
<feature type="glycosylation site" description="N-linked (GlcNAc...) asparagine" evidence="2">
    <location>
        <position position="490"/>
    </location>
</feature>
<feature type="glycosylation site" description="N-linked (GlcNAc...) asparagine" evidence="2">
    <location>
        <position position="505"/>
    </location>
</feature>
<feature type="glycosylation site" description="N-linked (GlcNAc...) asparagine" evidence="2">
    <location>
        <position position="552"/>
    </location>
</feature>
<feature type="glycosylation site" description="N-linked (GlcNAc...) asparagine" evidence="2">
    <location>
        <position position="566"/>
    </location>
</feature>
<dbReference type="EMBL" id="AAHF01000005">
    <property type="protein sequence ID" value="EAL89670.1"/>
    <property type="molecule type" value="Genomic_DNA"/>
</dbReference>
<dbReference type="RefSeq" id="XP_751708.1">
    <property type="nucleotide sequence ID" value="XM_746615.1"/>
</dbReference>
<dbReference type="FunCoup" id="Q4WQ14">
    <property type="interactions" value="24"/>
</dbReference>
<dbReference type="STRING" id="330879.Q4WQ14"/>
<dbReference type="GlyCosmos" id="Q4WQ14">
    <property type="glycosylation" value="11 sites, No reported glycans"/>
</dbReference>
<dbReference type="EnsemblFungi" id="EAL89670">
    <property type="protein sequence ID" value="EAL89670"/>
    <property type="gene ID" value="AFUA_4G11210"/>
</dbReference>
<dbReference type="GeneID" id="3509053"/>
<dbReference type="KEGG" id="afm:AFUA_4G11210"/>
<dbReference type="VEuPathDB" id="FungiDB:Afu4g11210"/>
<dbReference type="eggNOG" id="ENOG502QRP5">
    <property type="taxonomic scope" value="Eukaryota"/>
</dbReference>
<dbReference type="HOGENOM" id="CLU_010191_1_0_1"/>
<dbReference type="InParanoid" id="Q4WQ14"/>
<dbReference type="OMA" id="NVFGWVN"/>
<dbReference type="OrthoDB" id="5356111at2759"/>
<dbReference type="Proteomes" id="UP000002530">
    <property type="component" value="Chromosome 4"/>
</dbReference>
<dbReference type="GO" id="GO:0043332">
    <property type="term" value="C:mating projection tip"/>
    <property type="evidence" value="ECO:0000318"/>
    <property type="project" value="GO_Central"/>
</dbReference>
<dbReference type="GO" id="GO:0005886">
    <property type="term" value="C:plasma membrane"/>
    <property type="evidence" value="ECO:0007669"/>
    <property type="project" value="UniProtKB-SubCell"/>
</dbReference>
<dbReference type="GO" id="GO:0032220">
    <property type="term" value="P:plasma membrane fusion involved in cytogamy"/>
    <property type="evidence" value="ECO:0000318"/>
    <property type="project" value="GO_Central"/>
</dbReference>
<dbReference type="InterPro" id="IPR026777">
    <property type="entry name" value="PRM1"/>
</dbReference>
<dbReference type="PANTHER" id="PTHR31030">
    <property type="entry name" value="PLASMA MEMBRANE FUSION PROTEIN PRM1"/>
    <property type="match status" value="1"/>
</dbReference>
<dbReference type="PANTHER" id="PTHR31030:SF1">
    <property type="entry name" value="PLASMA MEMBRANE FUSION PROTEIN PRM1"/>
    <property type="match status" value="1"/>
</dbReference>
<accession>Q4WQ14</accession>
<gene>
    <name type="primary">prm1</name>
    <name type="ORF">AFUA_4G11210</name>
</gene>
<protein>
    <recommendedName>
        <fullName>Plasma membrane fusion protein prm1</fullName>
    </recommendedName>
</protein>
<keyword id="KW-1003">Cell membrane</keyword>
<keyword id="KW-0184">Conjugation</keyword>
<keyword id="KW-0325">Glycoprotein</keyword>
<keyword id="KW-0472">Membrane</keyword>
<keyword id="KW-1185">Reference proteome</keyword>
<keyword id="KW-0812">Transmembrane</keyword>
<keyword id="KW-1133">Transmembrane helix</keyword>